<proteinExistence type="evidence at transcript level"/>
<sequence length="184" mass="21397">MVRYSLDPENPTKSCKSRGSNLRVHFKNTRETAQAIKGMHIRKATKYLKDVTLKKQCVPFRRYNGGVGRCAQAKQWGWTQGRWPKKSAEFLLHMLKNAESNAELKGLDVDSLVIEHIQVNKAPKMRRRTYRAHGRINPYMSSPCHIEMILTEKEQIVPKPEEEVAQKKKISQKKLKKQKLMARE</sequence>
<gene>
    <name type="primary">Rpl17</name>
</gene>
<name>RL17_RAT</name>
<accession>P24049</accession>
<accession>Q4G093</accession>
<comment type="function">
    <text evidence="1">Component of the large ribosomal subunit. The ribosome is a large ribonucleoprotein complex responsible for the synthesis of proteins in the cell.</text>
</comment>
<comment type="subunit">
    <text evidence="1">Component of the large ribosomal subunit.</text>
</comment>
<comment type="subcellular location">
    <subcellularLocation>
        <location evidence="1">Cytoplasm</location>
    </subcellularLocation>
</comment>
<comment type="similarity">
    <text evidence="3">Belongs to the universal ribosomal protein uL22 family.</text>
</comment>
<organism>
    <name type="scientific">Rattus norvegicus</name>
    <name type="common">Rat</name>
    <dbReference type="NCBI Taxonomy" id="10116"/>
    <lineage>
        <taxon>Eukaryota</taxon>
        <taxon>Metazoa</taxon>
        <taxon>Chordata</taxon>
        <taxon>Craniata</taxon>
        <taxon>Vertebrata</taxon>
        <taxon>Euteleostomi</taxon>
        <taxon>Mammalia</taxon>
        <taxon>Eutheria</taxon>
        <taxon>Euarchontoglires</taxon>
        <taxon>Glires</taxon>
        <taxon>Rodentia</taxon>
        <taxon>Myomorpha</taxon>
        <taxon>Muroidea</taxon>
        <taxon>Muridae</taxon>
        <taxon>Murinae</taxon>
        <taxon>Rattus</taxon>
    </lineage>
</organism>
<feature type="chain" id="PRO_0000125334" description="Large ribosomal subunit protein uL22">
    <location>
        <begin position="1"/>
        <end position="184"/>
    </location>
</feature>
<feature type="region of interest" description="Disordered" evidence="2">
    <location>
        <begin position="160"/>
        <end position="184"/>
    </location>
</feature>
<feature type="compositionally biased region" description="Basic residues" evidence="2">
    <location>
        <begin position="167"/>
        <end position="184"/>
    </location>
</feature>
<protein>
    <recommendedName>
        <fullName evidence="3">Large ribosomal subunit protein uL22</fullName>
    </recommendedName>
    <alternativeName>
        <fullName>60S ribosomal protein L17</fullName>
    </alternativeName>
    <alternativeName>
        <fullName>Amino acid starvation-induced protein</fullName>
        <shortName>ASI</shortName>
    </alternativeName>
    <alternativeName>
        <fullName>L23</fullName>
    </alternativeName>
</protein>
<evidence type="ECO:0000250" key="1">
    <source>
        <dbReference type="UniProtKB" id="P18621"/>
    </source>
</evidence>
<evidence type="ECO:0000256" key="2">
    <source>
        <dbReference type="SAM" id="MobiDB-lite"/>
    </source>
</evidence>
<evidence type="ECO:0000305" key="3"/>
<dbReference type="EMBL" id="X58389">
    <property type="protein sequence ID" value="CAA41278.1"/>
    <property type="molecule type" value="mRNA"/>
</dbReference>
<dbReference type="EMBL" id="X60212">
    <property type="protein sequence ID" value="CAA42765.1"/>
    <property type="molecule type" value="mRNA"/>
</dbReference>
<dbReference type="EMBL" id="BC098644">
    <property type="protein sequence ID" value="AAH98644.1"/>
    <property type="molecule type" value="mRNA"/>
</dbReference>
<dbReference type="EMBL" id="M60478">
    <property type="protein sequence ID" value="AAA40765.1"/>
    <property type="molecule type" value="mRNA"/>
</dbReference>
<dbReference type="PIR" id="JN0078">
    <property type="entry name" value="R5RT17"/>
</dbReference>
<dbReference type="RefSeq" id="NP_958818.1">
    <property type="nucleotide sequence ID" value="NM_201415.2"/>
</dbReference>
<dbReference type="RefSeq" id="XP_038952567.1">
    <property type="nucleotide sequence ID" value="XM_039096639.2"/>
</dbReference>
<dbReference type="RefSeq" id="XP_063133237.1">
    <property type="nucleotide sequence ID" value="XM_063277167.1"/>
</dbReference>
<dbReference type="SMR" id="P24049"/>
<dbReference type="BioGRID" id="253514">
    <property type="interactions" value="4"/>
</dbReference>
<dbReference type="FunCoup" id="P24049">
    <property type="interactions" value="2527"/>
</dbReference>
<dbReference type="IntAct" id="P24049">
    <property type="interactions" value="3"/>
</dbReference>
<dbReference type="MINT" id="P24049"/>
<dbReference type="STRING" id="10116.ENSRNOP00000039774"/>
<dbReference type="PhosphoSitePlus" id="P24049"/>
<dbReference type="jPOST" id="P24049"/>
<dbReference type="PaxDb" id="10116-ENSRNOP00000025217"/>
<dbReference type="Ensembl" id="ENSRNOT00000025217.7">
    <property type="protein sequence ID" value="ENSRNOP00000025217.7"/>
    <property type="gene ID" value="ENSRNOG00000018680.7"/>
</dbReference>
<dbReference type="GeneID" id="291434"/>
<dbReference type="KEGG" id="rno:291434"/>
<dbReference type="AGR" id="RGD:1303019"/>
<dbReference type="CTD" id="6139"/>
<dbReference type="RGD" id="1303019">
    <property type="gene designation" value="Rpl17"/>
</dbReference>
<dbReference type="eggNOG" id="KOG3353">
    <property type="taxonomic scope" value="Eukaryota"/>
</dbReference>
<dbReference type="GeneTree" id="ENSGT00950000183010"/>
<dbReference type="HOGENOM" id="CLU_083987_0_1_1"/>
<dbReference type="InParanoid" id="P24049"/>
<dbReference type="OMA" id="CKAKGND"/>
<dbReference type="OrthoDB" id="10017723at2759"/>
<dbReference type="PhylomeDB" id="P24049"/>
<dbReference type="TreeFam" id="TF300042"/>
<dbReference type="Reactome" id="R-RNO-156827">
    <property type="pathway name" value="L13a-mediated translational silencing of Ceruloplasmin expression"/>
</dbReference>
<dbReference type="Reactome" id="R-RNO-1799339">
    <property type="pathway name" value="SRP-dependent cotranslational protein targeting to membrane"/>
</dbReference>
<dbReference type="Reactome" id="R-RNO-6791226">
    <property type="pathway name" value="Major pathway of rRNA processing in the nucleolus and cytosol"/>
</dbReference>
<dbReference type="Reactome" id="R-RNO-72689">
    <property type="pathway name" value="Formation of a pool of free 40S subunits"/>
</dbReference>
<dbReference type="Reactome" id="R-RNO-72706">
    <property type="pathway name" value="GTP hydrolysis and joining of the 60S ribosomal subunit"/>
</dbReference>
<dbReference type="Reactome" id="R-RNO-975956">
    <property type="pathway name" value="Nonsense Mediated Decay (NMD) independent of the Exon Junction Complex (EJC)"/>
</dbReference>
<dbReference type="Reactome" id="R-RNO-975957">
    <property type="pathway name" value="Nonsense Mediated Decay (NMD) enhanced by the Exon Junction Complex (EJC)"/>
</dbReference>
<dbReference type="PRO" id="PR:P24049"/>
<dbReference type="Proteomes" id="UP000002494">
    <property type="component" value="Chromosome 18"/>
</dbReference>
<dbReference type="GO" id="GO:0031672">
    <property type="term" value="C:A band"/>
    <property type="evidence" value="ECO:0000314"/>
    <property type="project" value="RGD"/>
</dbReference>
<dbReference type="GO" id="GO:0005737">
    <property type="term" value="C:cytoplasm"/>
    <property type="evidence" value="ECO:0000266"/>
    <property type="project" value="RGD"/>
</dbReference>
<dbReference type="GO" id="GO:0022625">
    <property type="term" value="C:cytosolic large ribosomal subunit"/>
    <property type="evidence" value="ECO:0000314"/>
    <property type="project" value="RGD"/>
</dbReference>
<dbReference type="GO" id="GO:0022626">
    <property type="term" value="C:cytosolic ribosome"/>
    <property type="evidence" value="ECO:0000266"/>
    <property type="project" value="RGD"/>
</dbReference>
<dbReference type="GO" id="GO:0045202">
    <property type="term" value="C:synapse"/>
    <property type="evidence" value="ECO:0000266"/>
    <property type="project" value="RGD"/>
</dbReference>
<dbReference type="GO" id="GO:0070180">
    <property type="term" value="F:large ribosomal subunit rRNA binding"/>
    <property type="evidence" value="ECO:0000314"/>
    <property type="project" value="RGD"/>
</dbReference>
<dbReference type="GO" id="GO:0003735">
    <property type="term" value="F:structural constituent of ribosome"/>
    <property type="evidence" value="ECO:0000266"/>
    <property type="project" value="RGD"/>
</dbReference>
<dbReference type="GO" id="GO:0034198">
    <property type="term" value="P:cellular response to amino acid starvation"/>
    <property type="evidence" value="ECO:0000270"/>
    <property type="project" value="RGD"/>
</dbReference>
<dbReference type="GO" id="GO:0002181">
    <property type="term" value="P:cytoplasmic translation"/>
    <property type="evidence" value="ECO:0000318"/>
    <property type="project" value="GO_Central"/>
</dbReference>
<dbReference type="GO" id="GO:1900087">
    <property type="term" value="P:positive regulation of G1/S transition of mitotic cell cycle"/>
    <property type="evidence" value="ECO:0000315"/>
    <property type="project" value="RGD"/>
</dbReference>
<dbReference type="GO" id="GO:1990928">
    <property type="term" value="P:response to amino acid starvation"/>
    <property type="evidence" value="ECO:0000270"/>
    <property type="project" value="RGD"/>
</dbReference>
<dbReference type="CDD" id="cd00336">
    <property type="entry name" value="Ribosomal_L22"/>
    <property type="match status" value="1"/>
</dbReference>
<dbReference type="FunFam" id="3.90.470.10:FF:000003">
    <property type="entry name" value="60S ribosomal protein L17"/>
    <property type="match status" value="1"/>
</dbReference>
<dbReference type="Gene3D" id="3.90.470.10">
    <property type="entry name" value="Ribosomal protein L22/L17"/>
    <property type="match status" value="1"/>
</dbReference>
<dbReference type="HAMAP" id="MF_01331_A">
    <property type="entry name" value="Ribosomal_uL22_A"/>
    <property type="match status" value="1"/>
</dbReference>
<dbReference type="InterPro" id="IPR001063">
    <property type="entry name" value="Ribosomal_uL22"/>
</dbReference>
<dbReference type="InterPro" id="IPR018260">
    <property type="entry name" value="Ribosomal_uL22_CS"/>
</dbReference>
<dbReference type="InterPro" id="IPR005721">
    <property type="entry name" value="Ribosomal_uL22_euk/arc"/>
</dbReference>
<dbReference type="InterPro" id="IPR036394">
    <property type="entry name" value="Ribosomal_uL22_sf"/>
</dbReference>
<dbReference type="NCBIfam" id="NF003260">
    <property type="entry name" value="PRK04223.1"/>
    <property type="match status" value="1"/>
</dbReference>
<dbReference type="NCBIfam" id="TIGR01038">
    <property type="entry name" value="uL22_arch_euk"/>
    <property type="match status" value="1"/>
</dbReference>
<dbReference type="PANTHER" id="PTHR11593">
    <property type="entry name" value="60S RIBOSOMAL PROTEIN L17"/>
    <property type="match status" value="1"/>
</dbReference>
<dbReference type="PANTHER" id="PTHR11593:SF10">
    <property type="entry name" value="60S RIBOSOMAL PROTEIN L17"/>
    <property type="match status" value="1"/>
</dbReference>
<dbReference type="Pfam" id="PF00237">
    <property type="entry name" value="Ribosomal_L22"/>
    <property type="match status" value="1"/>
</dbReference>
<dbReference type="SUPFAM" id="SSF54843">
    <property type="entry name" value="Ribosomal protein L22"/>
    <property type="match status" value="1"/>
</dbReference>
<dbReference type="PROSITE" id="PS00464">
    <property type="entry name" value="RIBOSOMAL_L22"/>
    <property type="match status" value="1"/>
</dbReference>
<keyword id="KW-0963">Cytoplasm</keyword>
<keyword id="KW-1185">Reference proteome</keyword>
<keyword id="KW-0687">Ribonucleoprotein</keyword>
<keyword id="KW-0689">Ribosomal protein</keyword>
<reference key="1">
    <citation type="journal article" date="1991" name="Biochem. Biophys. Res. Commun.">
        <title>The primary structure of rat ribosomal protein L17.</title>
        <authorList>
            <person name="Suzuki K."/>
            <person name="Wool I.G."/>
        </authorList>
    </citation>
    <scope>NUCLEOTIDE SEQUENCE [MRNA]</scope>
    <source>
        <strain>Sprague-Dawley</strain>
        <tissue>Liver</tissue>
    </source>
</reference>
<reference key="2">
    <citation type="journal article" date="1991" name="J. Biol. Chem.">
        <title>Identification of an amino acid-regulated mRNA from rat liver as the mammalian equivalent of bacterial ribosomal protein L22.</title>
        <authorList>
            <person name="Laine R.O."/>
            <person name="Laipis P.J."/>
            <person name="Shay N.F."/>
            <person name="Kilberg M.S."/>
        </authorList>
    </citation>
    <scope>NUCLEOTIDE SEQUENCE [MRNA]</scope>
    <source>
        <strain>Sprague-Dawley</strain>
        <tissue>Liver</tissue>
    </source>
</reference>
<reference key="3">
    <citation type="journal article" date="2004" name="Genome Res.">
        <title>The status, quality, and expansion of the NIH full-length cDNA project: the Mammalian Gene Collection (MGC).</title>
        <authorList>
            <consortium name="The MGC Project Team"/>
        </authorList>
    </citation>
    <scope>NUCLEOTIDE SEQUENCE [LARGE SCALE MRNA]</scope>
    <source>
        <tissue>Kidney</tissue>
    </source>
</reference>
<reference key="4">
    <citation type="journal article" date="1990" name="J. Biol. Chem.">
        <title>Molecular cloning of an amino acid-regulated mRNA (amino acid starvation-induced) in rat hepatoma cells.</title>
        <authorList>
            <person name="Shay N.F."/>
            <person name="Nick H.S."/>
            <person name="Kilberg M.S."/>
        </authorList>
    </citation>
    <scope>NUCLEOTIDE SEQUENCE [MRNA] OF 65-184</scope>
    <source>
        <strain>Sprague-Dawley</strain>
        <tissue>Liver</tissue>
    </source>
</reference>